<gene>
    <name evidence="1" type="primary">grpE</name>
    <name type="ordered locus">LBL_2645</name>
</gene>
<evidence type="ECO:0000255" key="1">
    <source>
        <dbReference type="HAMAP-Rule" id="MF_01151"/>
    </source>
</evidence>
<evidence type="ECO:0000256" key="2">
    <source>
        <dbReference type="SAM" id="MobiDB-lite"/>
    </source>
</evidence>
<accession>Q04Y46</accession>
<protein>
    <recommendedName>
        <fullName evidence="1">Protein GrpE</fullName>
    </recommendedName>
    <alternativeName>
        <fullName evidence="1">HSP-70 cofactor</fullName>
    </alternativeName>
</protein>
<organism>
    <name type="scientific">Leptospira borgpetersenii serovar Hardjo-bovis (strain L550)</name>
    <dbReference type="NCBI Taxonomy" id="355276"/>
    <lineage>
        <taxon>Bacteria</taxon>
        <taxon>Pseudomonadati</taxon>
        <taxon>Spirochaetota</taxon>
        <taxon>Spirochaetia</taxon>
        <taxon>Leptospirales</taxon>
        <taxon>Leptospiraceae</taxon>
        <taxon>Leptospira</taxon>
    </lineage>
</organism>
<name>GRPE_LEPBL</name>
<comment type="function">
    <text evidence="1">Participates actively in the response to hyperosmotic and heat shock by preventing the aggregation of stress-denatured proteins, in association with DnaK and GrpE. It is the nucleotide exchange factor for DnaK and may function as a thermosensor. Unfolded proteins bind initially to DnaJ; upon interaction with the DnaJ-bound protein, DnaK hydrolyzes its bound ATP, resulting in the formation of a stable complex. GrpE releases ADP from DnaK; ATP binding to DnaK triggers the release of the substrate protein, thus completing the reaction cycle. Several rounds of ATP-dependent interactions between DnaJ, DnaK and GrpE are required for fully efficient folding.</text>
</comment>
<comment type="subunit">
    <text evidence="1">Homodimer.</text>
</comment>
<comment type="subcellular location">
    <subcellularLocation>
        <location evidence="1">Cytoplasm</location>
    </subcellularLocation>
</comment>
<comment type="similarity">
    <text evidence="1">Belongs to the GrpE family.</text>
</comment>
<dbReference type="EMBL" id="CP000348">
    <property type="protein sequence ID" value="ABJ79999.1"/>
    <property type="molecule type" value="Genomic_DNA"/>
</dbReference>
<dbReference type="RefSeq" id="WP_002723296.1">
    <property type="nucleotide sequence ID" value="NC_008508.1"/>
</dbReference>
<dbReference type="SMR" id="Q04Y46"/>
<dbReference type="GeneID" id="61172628"/>
<dbReference type="KEGG" id="lbl:LBL_2645"/>
<dbReference type="HOGENOM" id="CLU_057217_5_2_12"/>
<dbReference type="GO" id="GO:0005737">
    <property type="term" value="C:cytoplasm"/>
    <property type="evidence" value="ECO:0007669"/>
    <property type="project" value="UniProtKB-SubCell"/>
</dbReference>
<dbReference type="GO" id="GO:0000774">
    <property type="term" value="F:adenyl-nucleotide exchange factor activity"/>
    <property type="evidence" value="ECO:0007669"/>
    <property type="project" value="InterPro"/>
</dbReference>
<dbReference type="GO" id="GO:0042803">
    <property type="term" value="F:protein homodimerization activity"/>
    <property type="evidence" value="ECO:0007669"/>
    <property type="project" value="InterPro"/>
</dbReference>
<dbReference type="GO" id="GO:0051087">
    <property type="term" value="F:protein-folding chaperone binding"/>
    <property type="evidence" value="ECO:0007669"/>
    <property type="project" value="InterPro"/>
</dbReference>
<dbReference type="GO" id="GO:0051082">
    <property type="term" value="F:unfolded protein binding"/>
    <property type="evidence" value="ECO:0007669"/>
    <property type="project" value="TreeGrafter"/>
</dbReference>
<dbReference type="GO" id="GO:0006457">
    <property type="term" value="P:protein folding"/>
    <property type="evidence" value="ECO:0007669"/>
    <property type="project" value="InterPro"/>
</dbReference>
<dbReference type="CDD" id="cd00446">
    <property type="entry name" value="GrpE"/>
    <property type="match status" value="1"/>
</dbReference>
<dbReference type="FunFam" id="2.30.22.10:FF:000006">
    <property type="entry name" value="Protein GrpE"/>
    <property type="match status" value="1"/>
</dbReference>
<dbReference type="Gene3D" id="3.90.20.20">
    <property type="match status" value="1"/>
</dbReference>
<dbReference type="Gene3D" id="2.30.22.10">
    <property type="entry name" value="Head domain of nucleotide exchange factor GrpE"/>
    <property type="match status" value="1"/>
</dbReference>
<dbReference type="HAMAP" id="MF_01151">
    <property type="entry name" value="GrpE"/>
    <property type="match status" value="1"/>
</dbReference>
<dbReference type="InterPro" id="IPR000740">
    <property type="entry name" value="GrpE"/>
</dbReference>
<dbReference type="InterPro" id="IPR013805">
    <property type="entry name" value="GrpE_coiled_coil"/>
</dbReference>
<dbReference type="InterPro" id="IPR009012">
    <property type="entry name" value="GrpE_head"/>
</dbReference>
<dbReference type="NCBIfam" id="NF010744">
    <property type="entry name" value="PRK14146.1"/>
    <property type="match status" value="1"/>
</dbReference>
<dbReference type="PANTHER" id="PTHR21237">
    <property type="entry name" value="GRPE PROTEIN"/>
    <property type="match status" value="1"/>
</dbReference>
<dbReference type="PANTHER" id="PTHR21237:SF23">
    <property type="entry name" value="GRPE PROTEIN HOMOLOG, MITOCHONDRIAL"/>
    <property type="match status" value="1"/>
</dbReference>
<dbReference type="Pfam" id="PF01025">
    <property type="entry name" value="GrpE"/>
    <property type="match status" value="1"/>
</dbReference>
<dbReference type="PRINTS" id="PR00773">
    <property type="entry name" value="GRPEPROTEIN"/>
</dbReference>
<dbReference type="SUPFAM" id="SSF58014">
    <property type="entry name" value="Coiled-coil domain of nucleotide exchange factor GrpE"/>
    <property type="match status" value="1"/>
</dbReference>
<dbReference type="SUPFAM" id="SSF51064">
    <property type="entry name" value="Head domain of nucleotide exchange factor GrpE"/>
    <property type="match status" value="1"/>
</dbReference>
<dbReference type="PROSITE" id="PS01071">
    <property type="entry name" value="GRPE"/>
    <property type="match status" value="1"/>
</dbReference>
<proteinExistence type="inferred from homology"/>
<sequence length="217" mass="24439">MAETSNSENKTSEEAKASEKNSRSITLEETKLENMNSEESTQTTESTQAQAAEAADSELSLQSELDAAKKEVESLKDSWARERAEFQNFKRRSAQEFVSIRKEAVKSLVSGFLNPIDNLERVGATQSPSEELKPFVEGVAMILKEFYAVLEKSNVIRFDPKGESFDPMSMEALSSEEGDQYSEETVIDVYQAGYYYKENEDKFTLRPARVRIGKPKS</sequence>
<keyword id="KW-0143">Chaperone</keyword>
<keyword id="KW-0963">Cytoplasm</keyword>
<keyword id="KW-0346">Stress response</keyword>
<reference key="1">
    <citation type="journal article" date="2006" name="Proc. Natl. Acad. Sci. U.S.A.">
        <title>Genome reduction in Leptospira borgpetersenii reflects limited transmission potential.</title>
        <authorList>
            <person name="Bulach D.M."/>
            <person name="Zuerner R.L."/>
            <person name="Wilson P."/>
            <person name="Seemann T."/>
            <person name="McGrath A."/>
            <person name="Cullen P.A."/>
            <person name="Davis J."/>
            <person name="Johnson M."/>
            <person name="Kuczek E."/>
            <person name="Alt D.P."/>
            <person name="Peterson-Burch B."/>
            <person name="Coppel R.L."/>
            <person name="Rood J.I."/>
            <person name="Davies J.K."/>
            <person name="Adler B."/>
        </authorList>
    </citation>
    <scope>NUCLEOTIDE SEQUENCE [LARGE SCALE GENOMIC DNA]</scope>
    <source>
        <strain>L550</strain>
    </source>
</reference>
<feature type="chain" id="PRO_1000053601" description="Protein GrpE">
    <location>
        <begin position="1"/>
        <end position="217"/>
    </location>
</feature>
<feature type="region of interest" description="Disordered" evidence="2">
    <location>
        <begin position="1"/>
        <end position="63"/>
    </location>
</feature>
<feature type="compositionally biased region" description="Basic and acidic residues" evidence="2">
    <location>
        <begin position="10"/>
        <end position="32"/>
    </location>
</feature>
<feature type="compositionally biased region" description="Low complexity" evidence="2">
    <location>
        <begin position="37"/>
        <end position="63"/>
    </location>
</feature>